<feature type="chain" id="PRO_1000099199" description="Mannitol-1-phosphate 5-dehydrogenase">
    <location>
        <begin position="1"/>
        <end position="382"/>
    </location>
</feature>
<feature type="binding site" evidence="1">
    <location>
        <begin position="3"/>
        <end position="14"/>
    </location>
    <ligand>
        <name>NAD(+)</name>
        <dbReference type="ChEBI" id="CHEBI:57540"/>
    </ligand>
</feature>
<reference key="1">
    <citation type="journal article" date="2011" name="J. Bacteriol.">
        <title>Comparative genomics of 28 Salmonella enterica isolates: evidence for CRISPR-mediated adaptive sublineage evolution.</title>
        <authorList>
            <person name="Fricke W.F."/>
            <person name="Mammel M.K."/>
            <person name="McDermott P.F."/>
            <person name="Tartera C."/>
            <person name="White D.G."/>
            <person name="Leclerc J.E."/>
            <person name="Ravel J."/>
            <person name="Cebula T.A."/>
        </authorList>
    </citation>
    <scope>NUCLEOTIDE SEQUENCE [LARGE SCALE GENOMIC DNA]</scope>
    <source>
        <strain>SL476</strain>
    </source>
</reference>
<name>MTLD_SALHS</name>
<comment type="catalytic activity">
    <reaction evidence="1">
        <text>D-mannitol 1-phosphate + NAD(+) = beta-D-fructose 6-phosphate + NADH + H(+)</text>
        <dbReference type="Rhea" id="RHEA:19661"/>
        <dbReference type="ChEBI" id="CHEBI:15378"/>
        <dbReference type="ChEBI" id="CHEBI:57540"/>
        <dbReference type="ChEBI" id="CHEBI:57634"/>
        <dbReference type="ChEBI" id="CHEBI:57945"/>
        <dbReference type="ChEBI" id="CHEBI:61381"/>
        <dbReference type="EC" id="1.1.1.17"/>
    </reaction>
</comment>
<comment type="similarity">
    <text evidence="1">Belongs to the mannitol dehydrogenase family.</text>
</comment>
<keyword id="KW-0520">NAD</keyword>
<keyword id="KW-0560">Oxidoreductase</keyword>
<sequence length="382" mass="40910">MKALHFGAGNIGRGFIGKLLADAGIQLTFADVNQVVLDALNARHSYQVHVVGENEQVDTVSGVNAVSSIGDDVVDLIAHVDLITTAVGPVVLERIAPAIAKGLVKRKAQGVDAPLNIIACENMVRGTTQLKGHVMNALADGDKAWVEQHVGFVDSAVDRIVPPSASATHDPLEVTVETFSEWIVDKTQFKGALPTIPGMELTDNLMAFVERKLFTLNTGHAITAYLGKLAGHQTIRDAILDESIRAVVKGAMEESGAVLIKRYGFDADKHAAYIQKILGRFENPYLKDDVERVGRQPLRKLSAGDRLIKPLLGTLEYGLPHVNLVKGIAAAMHFRSDEDPQAQELAALITEKGPQAALAQISGLDANSDVVAEAVNAYNATK</sequence>
<proteinExistence type="inferred from homology"/>
<evidence type="ECO:0000255" key="1">
    <source>
        <dbReference type="HAMAP-Rule" id="MF_00196"/>
    </source>
</evidence>
<gene>
    <name evidence="1" type="primary">mtlD</name>
    <name type="ordered locus">SeHA_C4009</name>
</gene>
<protein>
    <recommendedName>
        <fullName evidence="1">Mannitol-1-phosphate 5-dehydrogenase</fullName>
        <ecNumber evidence="1">1.1.1.17</ecNumber>
    </recommendedName>
</protein>
<organism>
    <name type="scientific">Salmonella heidelberg (strain SL476)</name>
    <dbReference type="NCBI Taxonomy" id="454169"/>
    <lineage>
        <taxon>Bacteria</taxon>
        <taxon>Pseudomonadati</taxon>
        <taxon>Pseudomonadota</taxon>
        <taxon>Gammaproteobacteria</taxon>
        <taxon>Enterobacterales</taxon>
        <taxon>Enterobacteriaceae</taxon>
        <taxon>Salmonella</taxon>
    </lineage>
</organism>
<dbReference type="EC" id="1.1.1.17" evidence="1"/>
<dbReference type="EMBL" id="CP001120">
    <property type="protein sequence ID" value="ACF69816.1"/>
    <property type="molecule type" value="Genomic_DNA"/>
</dbReference>
<dbReference type="RefSeq" id="WP_000645383.1">
    <property type="nucleotide sequence ID" value="NC_011083.1"/>
</dbReference>
<dbReference type="SMR" id="B4T977"/>
<dbReference type="KEGG" id="seh:SeHA_C4009"/>
<dbReference type="HOGENOM" id="CLU_036089_2_0_6"/>
<dbReference type="Proteomes" id="UP000001866">
    <property type="component" value="Chromosome"/>
</dbReference>
<dbReference type="GO" id="GO:0005829">
    <property type="term" value="C:cytosol"/>
    <property type="evidence" value="ECO:0007669"/>
    <property type="project" value="TreeGrafter"/>
</dbReference>
<dbReference type="GO" id="GO:0008926">
    <property type="term" value="F:mannitol-1-phosphate 5-dehydrogenase activity"/>
    <property type="evidence" value="ECO:0007669"/>
    <property type="project" value="UniProtKB-UniRule"/>
</dbReference>
<dbReference type="GO" id="GO:0019592">
    <property type="term" value="P:mannitol catabolic process"/>
    <property type="evidence" value="ECO:0007669"/>
    <property type="project" value="TreeGrafter"/>
</dbReference>
<dbReference type="FunFam" id="1.10.1040.10:FF:000009">
    <property type="entry name" value="Mannitol-1-phosphate 5-dehydrogenase"/>
    <property type="match status" value="1"/>
</dbReference>
<dbReference type="FunFam" id="3.40.50.720:FF:000075">
    <property type="entry name" value="Mannitol-1-phosphate 5-dehydrogenase"/>
    <property type="match status" value="1"/>
</dbReference>
<dbReference type="Gene3D" id="1.10.1040.10">
    <property type="entry name" value="N-(1-d-carboxylethyl)-l-norvaline Dehydrogenase, domain 2"/>
    <property type="match status" value="1"/>
</dbReference>
<dbReference type="Gene3D" id="3.40.50.720">
    <property type="entry name" value="NAD(P)-binding Rossmann-like Domain"/>
    <property type="match status" value="1"/>
</dbReference>
<dbReference type="HAMAP" id="MF_00196">
    <property type="entry name" value="Mannitol_dehydrog"/>
    <property type="match status" value="1"/>
</dbReference>
<dbReference type="InterPro" id="IPR008927">
    <property type="entry name" value="6-PGluconate_DH-like_C_sf"/>
</dbReference>
<dbReference type="InterPro" id="IPR013328">
    <property type="entry name" value="6PGD_dom2"/>
</dbReference>
<dbReference type="InterPro" id="IPR023028">
    <property type="entry name" value="Mannitol_1_phos_5_DH"/>
</dbReference>
<dbReference type="InterPro" id="IPR000669">
    <property type="entry name" value="Mannitol_DH"/>
</dbReference>
<dbReference type="InterPro" id="IPR013118">
    <property type="entry name" value="Mannitol_DH_C"/>
</dbReference>
<dbReference type="InterPro" id="IPR023027">
    <property type="entry name" value="Mannitol_DH_CS"/>
</dbReference>
<dbReference type="InterPro" id="IPR013131">
    <property type="entry name" value="Mannitol_DH_N"/>
</dbReference>
<dbReference type="InterPro" id="IPR036291">
    <property type="entry name" value="NAD(P)-bd_dom_sf"/>
</dbReference>
<dbReference type="NCBIfam" id="NF002646">
    <property type="entry name" value="PRK02318.1-2"/>
    <property type="match status" value="1"/>
</dbReference>
<dbReference type="NCBIfam" id="NF002647">
    <property type="entry name" value="PRK02318.1-3"/>
    <property type="match status" value="1"/>
</dbReference>
<dbReference type="NCBIfam" id="NF002648">
    <property type="entry name" value="PRK02318.1-4"/>
    <property type="match status" value="1"/>
</dbReference>
<dbReference type="NCBIfam" id="NF002650">
    <property type="entry name" value="PRK02318.2-2"/>
    <property type="match status" value="1"/>
</dbReference>
<dbReference type="NCBIfam" id="NF002652">
    <property type="entry name" value="PRK02318.2-5"/>
    <property type="match status" value="1"/>
</dbReference>
<dbReference type="PANTHER" id="PTHR30524:SF0">
    <property type="entry name" value="ALTRONATE OXIDOREDUCTASE-RELATED"/>
    <property type="match status" value="1"/>
</dbReference>
<dbReference type="PANTHER" id="PTHR30524">
    <property type="entry name" value="MANNITOL-1-PHOSPHATE 5-DEHYDROGENASE"/>
    <property type="match status" value="1"/>
</dbReference>
<dbReference type="Pfam" id="PF01232">
    <property type="entry name" value="Mannitol_dh"/>
    <property type="match status" value="1"/>
</dbReference>
<dbReference type="Pfam" id="PF08125">
    <property type="entry name" value="Mannitol_dh_C"/>
    <property type="match status" value="1"/>
</dbReference>
<dbReference type="PRINTS" id="PR00084">
    <property type="entry name" value="MTLDHDRGNASE"/>
</dbReference>
<dbReference type="SUPFAM" id="SSF48179">
    <property type="entry name" value="6-phosphogluconate dehydrogenase C-terminal domain-like"/>
    <property type="match status" value="1"/>
</dbReference>
<dbReference type="SUPFAM" id="SSF51735">
    <property type="entry name" value="NAD(P)-binding Rossmann-fold domains"/>
    <property type="match status" value="1"/>
</dbReference>
<dbReference type="PROSITE" id="PS00974">
    <property type="entry name" value="MANNITOL_DHGENASE"/>
    <property type="match status" value="1"/>
</dbReference>
<accession>B4T977</accession>